<accession>P84185</accession>
<accession>A0NCQ3</accession>
<accession>O02508</accession>
<accession>Q27250</accession>
<accession>Q7QEH5</accession>
<reference key="1">
    <citation type="journal article" date="1994" name="Insect Mol. Biol.">
        <title>A cytoskeletal actin gene in the mosquito Anopheles gambiae.</title>
        <authorList>
            <person name="Salazar C.E."/>
            <person name="Mills Hamm D.M."/>
            <person name="Wesson D.M."/>
            <person name="Beard C.B."/>
            <person name="Kumar V."/>
            <person name="Collins F.H."/>
        </authorList>
    </citation>
    <scope>NUCLEOTIDE SEQUENCE [GENOMIC DNA / MRNA]</scope>
    <source>
        <strain>G3</strain>
    </source>
</reference>
<reference key="2">
    <citation type="journal article" date="2002" name="Science">
        <title>The genome sequence of the malaria mosquito Anopheles gambiae.</title>
        <authorList>
            <person name="Holt R.A."/>
            <person name="Subramanian G.M."/>
            <person name="Halpern A."/>
            <person name="Sutton G.G."/>
            <person name="Charlab R."/>
            <person name="Nusskern D.R."/>
            <person name="Wincker P."/>
            <person name="Clark A.G."/>
            <person name="Ribeiro J.M.C."/>
            <person name="Wides R."/>
            <person name="Salzberg S.L."/>
            <person name="Loftus B.J."/>
            <person name="Yandell M.D."/>
            <person name="Majoros W.H."/>
            <person name="Rusch D.B."/>
            <person name="Lai Z."/>
            <person name="Kraft C.L."/>
            <person name="Abril J.F."/>
            <person name="Anthouard V."/>
            <person name="Arensburger P."/>
            <person name="Atkinson P.W."/>
            <person name="Baden H."/>
            <person name="de Berardinis V."/>
            <person name="Baldwin D."/>
            <person name="Benes V."/>
            <person name="Biedler J."/>
            <person name="Blass C."/>
            <person name="Bolanos R."/>
            <person name="Boscus D."/>
            <person name="Barnstead M."/>
            <person name="Cai S."/>
            <person name="Center A."/>
            <person name="Chaturverdi K."/>
            <person name="Christophides G.K."/>
            <person name="Chrystal M.A.M."/>
            <person name="Clamp M."/>
            <person name="Cravchik A."/>
            <person name="Curwen V."/>
            <person name="Dana A."/>
            <person name="Delcher A."/>
            <person name="Dew I."/>
            <person name="Evans C.A."/>
            <person name="Flanigan M."/>
            <person name="Grundschober-Freimoser A."/>
            <person name="Friedli L."/>
            <person name="Gu Z."/>
            <person name="Guan P."/>
            <person name="Guigo R."/>
            <person name="Hillenmeyer M.E."/>
            <person name="Hladun S.L."/>
            <person name="Hogan J.R."/>
            <person name="Hong Y.S."/>
            <person name="Hoover J."/>
            <person name="Jaillon O."/>
            <person name="Ke Z."/>
            <person name="Kodira C.D."/>
            <person name="Kokoza E."/>
            <person name="Koutsos A."/>
            <person name="Letunic I."/>
            <person name="Levitsky A.A."/>
            <person name="Liang Y."/>
            <person name="Lin J.-J."/>
            <person name="Lobo N.F."/>
            <person name="Lopez J.R."/>
            <person name="Malek J.A."/>
            <person name="McIntosh T.C."/>
            <person name="Meister S."/>
            <person name="Miller J.R."/>
            <person name="Mobarry C."/>
            <person name="Mongin E."/>
            <person name="Murphy S.D."/>
            <person name="O'Brochta D.A."/>
            <person name="Pfannkoch C."/>
            <person name="Qi R."/>
            <person name="Regier M.A."/>
            <person name="Remington K."/>
            <person name="Shao H."/>
            <person name="Sharakhova M.V."/>
            <person name="Sitter C.D."/>
            <person name="Shetty J."/>
            <person name="Smith T.J."/>
            <person name="Strong R."/>
            <person name="Sun J."/>
            <person name="Thomasova D."/>
            <person name="Ton L.Q."/>
            <person name="Topalis P."/>
            <person name="Tu Z.J."/>
            <person name="Unger M.F."/>
            <person name="Walenz B."/>
            <person name="Wang A.H."/>
            <person name="Wang J."/>
            <person name="Wang M."/>
            <person name="Wang X."/>
            <person name="Woodford K.J."/>
            <person name="Wortman J.R."/>
            <person name="Wu M."/>
            <person name="Yao A."/>
            <person name="Zdobnov E.M."/>
            <person name="Zhang H."/>
            <person name="Zhao Q."/>
            <person name="Zhao S."/>
            <person name="Zhu S.C."/>
            <person name="Zhimulev I."/>
            <person name="Coluzzi M."/>
            <person name="della Torre A."/>
            <person name="Roth C.W."/>
            <person name="Louis C."/>
            <person name="Kalush F."/>
            <person name="Mural R.J."/>
            <person name="Myers E.W."/>
            <person name="Adams M.D."/>
            <person name="Smith H.O."/>
            <person name="Broder S."/>
            <person name="Gardner M.J."/>
            <person name="Fraser C.M."/>
            <person name="Birney E."/>
            <person name="Bork P."/>
            <person name="Brey P.T."/>
            <person name="Venter J.C."/>
            <person name="Weissenbach J."/>
            <person name="Kafatos F.C."/>
            <person name="Collins F.H."/>
            <person name="Hoffman S.L."/>
        </authorList>
    </citation>
    <scope>NUCLEOTIDE SEQUENCE [LARGE SCALE GENOMIC DNA]</scope>
    <source>
        <strain>PEST</strain>
    </source>
</reference>
<protein>
    <recommendedName>
        <fullName>Actin-5C</fullName>
        <ecNumber evidence="2">3.6.4.-</ecNumber>
    </recommendedName>
    <alternativeName>
        <fullName>Actin-1D, cytoplasmic</fullName>
    </alternativeName>
</protein>
<name>ACT5C_ANOGA</name>
<sequence>MCDEEVAALVVDNGSGMCKAGFAGDDAPRAVFPSIVGRPRHQGVMVGMGQKDSYVGDEAQSKRGILTLKYPIEHGIVTNWDDMEKIWHHTFYNELRVAPEEHPVLLTEAPLNPKANREKMTQIMFETFNTPAMYVAIQAVLSLYASGRTTGIVLDSGDGVSHTVPIYEGYALPHAILRLDLAGRDLTDYLMKILTERGYSFTTTAEREIVRDIKEKLCYVALDFEQEMATAASSSSLEKSYELPDGQVITIGNERFRCPEALFQPSFLGMEACGIHETTYNSIMKCDVDIRKDLYANTVLSGGTTMYPGIADRMQKEITALAPSTMKIKIIAPPERKYSVWIGGSILASLSTFQQMWISKQEYDESGPSIVHRKCF</sequence>
<evidence type="ECO:0000250" key="1"/>
<evidence type="ECO:0000250" key="2">
    <source>
        <dbReference type="UniProtKB" id="P68137"/>
    </source>
</evidence>
<evidence type="ECO:0000305" key="3"/>
<dbReference type="EC" id="3.6.4.-" evidence="2"/>
<dbReference type="EMBL" id="U02930">
    <property type="protein sequence ID" value="AAA56881.1"/>
    <property type="molecule type" value="Genomic_DNA"/>
</dbReference>
<dbReference type="EMBL" id="U02933">
    <property type="protein sequence ID" value="AAA56882.1"/>
    <property type="molecule type" value="mRNA"/>
</dbReference>
<dbReference type="EMBL" id="U02964">
    <property type="protein sequence ID" value="AAA03444.1"/>
    <property type="molecule type" value="mRNA"/>
</dbReference>
<dbReference type="EMBL" id="AAAB01008847">
    <property type="protein sequence ID" value="EAU77199.1"/>
    <property type="molecule type" value="Genomic_DNA"/>
</dbReference>
<dbReference type="RefSeq" id="XP_001230772.1">
    <property type="nucleotide sequence ID" value="XM_001230771.3"/>
</dbReference>
<dbReference type="RefSeq" id="XP_003437049.1">
    <property type="nucleotide sequence ID" value="XM_003437001.1"/>
</dbReference>
<dbReference type="RefSeq" id="XP_003437050.1">
    <property type="nucleotide sequence ID" value="XM_003437002.1"/>
</dbReference>
<dbReference type="SMR" id="P84185"/>
<dbReference type="FunCoup" id="P84185">
    <property type="interactions" value="1204"/>
</dbReference>
<dbReference type="STRING" id="7165.P84185"/>
<dbReference type="PaxDb" id="7165-AGAP000651-PC"/>
<dbReference type="EnsemblMetazoa" id="AGAP000651-RA">
    <property type="protein sequence ID" value="AGAP000651-PA"/>
    <property type="gene ID" value="AGAP000651"/>
</dbReference>
<dbReference type="EnsemblMetazoa" id="AGAP000651-RB">
    <property type="protein sequence ID" value="AGAP000651-PB"/>
    <property type="gene ID" value="AGAP000651"/>
</dbReference>
<dbReference type="VEuPathDB" id="VectorBase:AGAMI1_005916"/>
<dbReference type="VEuPathDB" id="VectorBase:AGAP000651"/>
<dbReference type="eggNOG" id="KOG0676">
    <property type="taxonomic scope" value="Eukaryota"/>
</dbReference>
<dbReference type="HOGENOM" id="CLU_027965_0_2_1"/>
<dbReference type="InParanoid" id="P84185"/>
<dbReference type="OMA" id="FHTTAER"/>
<dbReference type="OrthoDB" id="5132116at2759"/>
<dbReference type="PhylomeDB" id="P84185"/>
<dbReference type="Proteomes" id="UP000007062">
    <property type="component" value="Chromosome X"/>
</dbReference>
<dbReference type="GO" id="GO:0015629">
    <property type="term" value="C:actin cytoskeleton"/>
    <property type="evidence" value="ECO:0000318"/>
    <property type="project" value="GO_Central"/>
</dbReference>
<dbReference type="GO" id="GO:0005737">
    <property type="term" value="C:cytoplasm"/>
    <property type="evidence" value="ECO:0007669"/>
    <property type="project" value="UniProtKB-KW"/>
</dbReference>
<dbReference type="GO" id="GO:0005524">
    <property type="term" value="F:ATP binding"/>
    <property type="evidence" value="ECO:0007669"/>
    <property type="project" value="UniProtKB-KW"/>
</dbReference>
<dbReference type="GO" id="GO:0016787">
    <property type="term" value="F:hydrolase activity"/>
    <property type="evidence" value="ECO:0007669"/>
    <property type="project" value="UniProtKB-KW"/>
</dbReference>
<dbReference type="GO" id="GO:0000281">
    <property type="term" value="P:mitotic cytokinesis"/>
    <property type="evidence" value="ECO:0000318"/>
    <property type="project" value="GO_Central"/>
</dbReference>
<dbReference type="CDD" id="cd10224">
    <property type="entry name" value="ASKHA_NBD_actin"/>
    <property type="match status" value="1"/>
</dbReference>
<dbReference type="FunFam" id="3.30.420.40:FF:000131">
    <property type="entry name" value="Actin, alpha skeletal muscle"/>
    <property type="match status" value="1"/>
</dbReference>
<dbReference type="FunFam" id="3.30.420.40:FF:000291">
    <property type="entry name" value="Actin, alpha skeletal muscle"/>
    <property type="match status" value="1"/>
</dbReference>
<dbReference type="FunFam" id="3.90.640.10:FF:000047">
    <property type="entry name" value="Actin, alpha skeletal muscle"/>
    <property type="match status" value="1"/>
</dbReference>
<dbReference type="FunFam" id="3.30.420.40:FF:000058">
    <property type="entry name" value="Putative actin-related protein 5"/>
    <property type="match status" value="1"/>
</dbReference>
<dbReference type="Gene3D" id="3.30.420.40">
    <property type="match status" value="2"/>
</dbReference>
<dbReference type="Gene3D" id="3.90.640.10">
    <property type="entry name" value="Actin, Chain A, domain 4"/>
    <property type="match status" value="1"/>
</dbReference>
<dbReference type="InterPro" id="IPR004000">
    <property type="entry name" value="Actin"/>
</dbReference>
<dbReference type="InterPro" id="IPR020902">
    <property type="entry name" value="Actin/actin-like_CS"/>
</dbReference>
<dbReference type="InterPro" id="IPR004001">
    <property type="entry name" value="Actin_CS"/>
</dbReference>
<dbReference type="InterPro" id="IPR043129">
    <property type="entry name" value="ATPase_NBD"/>
</dbReference>
<dbReference type="PANTHER" id="PTHR11937">
    <property type="entry name" value="ACTIN"/>
    <property type="match status" value="1"/>
</dbReference>
<dbReference type="Pfam" id="PF00022">
    <property type="entry name" value="Actin"/>
    <property type="match status" value="1"/>
</dbReference>
<dbReference type="PRINTS" id="PR00190">
    <property type="entry name" value="ACTIN"/>
</dbReference>
<dbReference type="SMART" id="SM00268">
    <property type="entry name" value="ACTIN"/>
    <property type="match status" value="1"/>
</dbReference>
<dbReference type="SUPFAM" id="SSF53067">
    <property type="entry name" value="Actin-like ATPase domain"/>
    <property type="match status" value="2"/>
</dbReference>
<dbReference type="PROSITE" id="PS00406">
    <property type="entry name" value="ACTINS_1"/>
    <property type="match status" value="1"/>
</dbReference>
<dbReference type="PROSITE" id="PS00432">
    <property type="entry name" value="ACTINS_2"/>
    <property type="match status" value="1"/>
</dbReference>
<dbReference type="PROSITE" id="PS01132">
    <property type="entry name" value="ACTINS_ACT_LIKE"/>
    <property type="match status" value="1"/>
</dbReference>
<feature type="propeptide" id="PRO_0000000606" description="Removed in mature form" evidence="1">
    <location>
        <begin position="1"/>
        <end position="2"/>
    </location>
</feature>
<feature type="chain" id="PRO_0000000607" description="Actin-5C">
    <location>
        <begin position="3"/>
        <end position="376"/>
    </location>
</feature>
<feature type="modified residue" description="N-acetylaspartate" evidence="1">
    <location>
        <position position="3"/>
    </location>
</feature>
<feature type="modified residue" description="Methionine sulfoxide" evidence="1">
    <location>
        <position position="45"/>
    </location>
</feature>
<feature type="modified residue" description="Methionine sulfoxide" evidence="1">
    <location>
        <position position="48"/>
    </location>
</feature>
<organism>
    <name type="scientific">Anopheles gambiae</name>
    <name type="common">African malaria mosquito</name>
    <dbReference type="NCBI Taxonomy" id="7165"/>
    <lineage>
        <taxon>Eukaryota</taxon>
        <taxon>Metazoa</taxon>
        <taxon>Ecdysozoa</taxon>
        <taxon>Arthropoda</taxon>
        <taxon>Hexapoda</taxon>
        <taxon>Insecta</taxon>
        <taxon>Pterygota</taxon>
        <taxon>Neoptera</taxon>
        <taxon>Endopterygota</taxon>
        <taxon>Diptera</taxon>
        <taxon>Nematocera</taxon>
        <taxon>Culicoidea</taxon>
        <taxon>Culicidae</taxon>
        <taxon>Anophelinae</taxon>
        <taxon>Anopheles</taxon>
    </lineage>
</organism>
<keyword id="KW-0007">Acetylation</keyword>
<keyword id="KW-0067">ATP-binding</keyword>
<keyword id="KW-0963">Cytoplasm</keyword>
<keyword id="KW-0206">Cytoskeleton</keyword>
<keyword id="KW-0378">Hydrolase</keyword>
<keyword id="KW-0547">Nucleotide-binding</keyword>
<keyword id="KW-0558">Oxidation</keyword>
<keyword id="KW-1185">Reference proteome</keyword>
<proteinExistence type="evidence at transcript level"/>
<comment type="function">
    <text>Actins are highly conserved proteins that are involved in various types of cell motility and are ubiquitously expressed in all eukaryotic cells. Multiple isoforms are involved in various cellular functions such as cytoskeleton structure, cell mobility, chromosome movement and muscle contraction.</text>
</comment>
<comment type="catalytic activity">
    <reaction evidence="2">
        <text>ATP + H2O = ADP + phosphate + H(+)</text>
        <dbReference type="Rhea" id="RHEA:13065"/>
        <dbReference type="ChEBI" id="CHEBI:15377"/>
        <dbReference type="ChEBI" id="CHEBI:15378"/>
        <dbReference type="ChEBI" id="CHEBI:30616"/>
        <dbReference type="ChEBI" id="CHEBI:43474"/>
        <dbReference type="ChEBI" id="CHEBI:456216"/>
    </reaction>
</comment>
<comment type="subcellular location">
    <subcellularLocation>
        <location>Cytoplasm</location>
        <location>Cytoskeleton</location>
    </subcellularLocation>
</comment>
<comment type="PTM">
    <text evidence="1">Oxidation of Met-45 to form methionine sulfoxide promotes actin filament depolymerization. Methionine sulfoxide is produced stereospecifically, but it is not known whether the (S)-S-oxide or the (R)-S-oxide is produced (By similarity).</text>
</comment>
<comment type="miscellaneous">
    <text>There are at least 5 different actin genes in A.gambiae.</text>
</comment>
<comment type="similarity">
    <text evidence="3">Belongs to the actin family.</text>
</comment>
<gene>
    <name type="primary">Act5C</name>
    <name type="synonym">act1d</name>
    <name type="ORF">AGAP000651</name>
</gene>